<keyword id="KW-0010">Activator</keyword>
<keyword id="KW-0106">Calcium</keyword>
<keyword id="KW-1003">Cell membrane</keyword>
<keyword id="KW-0217">Developmental protein</keyword>
<keyword id="KW-0221">Differentiation</keyword>
<keyword id="KW-1015">Disulfide bond</keyword>
<keyword id="KW-0245">EGF-like domain</keyword>
<keyword id="KW-0325">Glycoprotein</keyword>
<keyword id="KW-0472">Membrane</keyword>
<keyword id="KW-0914">Notch signaling pathway</keyword>
<keyword id="KW-0597">Phosphoprotein</keyword>
<keyword id="KW-0675">Receptor</keyword>
<keyword id="KW-1185">Reference proteome</keyword>
<keyword id="KW-0677">Repeat</keyword>
<keyword id="KW-0732">Signal</keyword>
<keyword id="KW-0812">Transmembrane</keyword>
<keyword id="KW-1133">Transmembrane helix</keyword>
<proteinExistence type="evidence at protein level"/>
<evidence type="ECO:0000255" key="1"/>
<evidence type="ECO:0000255" key="2">
    <source>
        <dbReference type="PROSITE-ProRule" id="PRU00076"/>
    </source>
</evidence>
<evidence type="ECO:0000269" key="3">
    <source>
    </source>
</evidence>
<evidence type="ECO:0000269" key="4">
    <source>
    </source>
</evidence>
<evidence type="ECO:0000269" key="5">
    <source>
    </source>
</evidence>
<evidence type="ECO:0000269" key="6">
    <source>
    </source>
</evidence>
<evidence type="ECO:0000305" key="7"/>
<evidence type="ECO:0007744" key="8">
    <source>
    </source>
</evidence>
<evidence type="ECO:0007744" key="9">
    <source>
    </source>
</evidence>
<name>DNER_MOUSE</name>
<sequence>MPPRRAQAPGAPLLPVLALLPLLLGAGPQSGCLASPVSAAPLPAPGPCASQPCRNGGVCTPRSVTDQEHPAADAEPRYSCTCPAGVSGTYCQFVADPCASNPCHHGNCSSSSSSSSDSYLCICNDGYEGLNCEQPLPSIPTSGWTESTAPRQLQPVPATQEPDIILPRSQATVTLPTWQPKTGQKVVEMKWDQVEVVPDVACGNASSNNSAGGRLVSFEVPQNTSVKIRQDANSLLILLWKVTATGFQQCSLIDGRSVTPLQAPGGLVLLEEMLALGPNHFIGFVNDSVAKSIVALRLTLVVKASNCVPGDSHSNDLECSGKGKCATKPSEATFSCTCQDQYIGTFCEEFDACQRKPCQNEASCIDANEKQDGSNFTCLCLPGYTGELCQSKIDYCVLDPCRNGATCVSSLSGFTCQCLEGYFGSACEEKVDPCMSSPCQNNGTCYVDGVHFTCSCSPGFTGPTCAQLVDFCALSPCAHGMCRSVGTSYKCLCDPGYHGLYCEEEYNECLSAPCLNAATCRDLINGYECVCLAEYKGTHCELYKDPCANISCLNGGTCDSEGLNGTCICAPGFTGEECDIDINECDSNPCHHAGTCLDQPNGYTCHCPHGWVGANCEIHLQWKSGHMAESLTNMPRHSLYIIIGALCVAFILMLIILIVGICRISRIEYQGSSRPAYEEFYNCRSIDSEFSNAIASIRHARFGKKSRPAMYDVTPIAYEDYSPDDKPLVTLIKTKDL</sequence>
<gene>
    <name type="primary">Dner</name>
    <name type="synonym">Bet</name>
    <name type="synonym">Bret</name>
</gene>
<accession>Q8JZM4</accession>
<accession>Q3U697</accession>
<accession>Q8R226</accession>
<accession>Q8R4T6</accession>
<accession>Q8VD97</accession>
<organism>
    <name type="scientific">Mus musculus</name>
    <name type="common">Mouse</name>
    <dbReference type="NCBI Taxonomy" id="10090"/>
    <lineage>
        <taxon>Eukaryota</taxon>
        <taxon>Metazoa</taxon>
        <taxon>Chordata</taxon>
        <taxon>Craniata</taxon>
        <taxon>Vertebrata</taxon>
        <taxon>Euteleostomi</taxon>
        <taxon>Mammalia</taxon>
        <taxon>Eutheria</taxon>
        <taxon>Euarchontoglires</taxon>
        <taxon>Glires</taxon>
        <taxon>Rodentia</taxon>
        <taxon>Myomorpha</taxon>
        <taxon>Muroidea</taxon>
        <taxon>Muridae</taxon>
        <taxon>Murinae</taxon>
        <taxon>Mus</taxon>
        <taxon>Mus</taxon>
    </lineage>
</organism>
<reference key="1">
    <citation type="journal article" date="2002" name="J. Biol. Chem.">
        <title>Delta/notch-like epidermal growth factor (EGF)-related receptor, a novel EGF-like repeat-containing protein targeted to dendrites of developing and adult central nervous system neurons.</title>
        <authorList>
            <person name="Eiraku M."/>
            <person name="Hirata Y."/>
            <person name="Takeshima H."/>
            <person name="Hirano T."/>
            <person name="Kengaku M."/>
        </authorList>
    </citation>
    <scope>NUCLEOTIDE SEQUENCE [MRNA]</scope>
    <scope>TISSUE SPECIFICITY</scope>
    <scope>DEVELOPMENTAL STAGE</scope>
    <scope>SUBCELLULAR LOCATION</scope>
    <scope>MUTAGENESIS OF TYR-677</scope>
    <scope>INTERACTION WITH AP1G1</scope>
    <source>
        <strain>ICR</strain>
        <tissue>Brain</tissue>
    </source>
</reference>
<reference key="2">
    <citation type="journal article" date="2002" name="NeuroReport">
        <title>BET, a novel neuronal transmembrane protein with multiple EGF-like motifs.</title>
        <authorList>
            <person name="Nishizumi H."/>
            <person name="Komiyama T."/>
            <person name="Miyabayashi T."/>
            <person name="Sakano S."/>
            <person name="Sakano H."/>
        </authorList>
    </citation>
    <scope>NUCLEOTIDE SEQUENCE [MRNA]</scope>
    <scope>SUBCELLULAR LOCATION</scope>
    <scope>TISSUE SPECIFICITY</scope>
    <scope>DEVELOPMENTAL STAGE</scope>
    <scope>GLYCOSYLATION</scope>
    <source>
        <strain>C57BL/6J</strain>
        <tissue>Brain</tissue>
    </source>
</reference>
<reference key="3">
    <citation type="journal article" date="2005" name="Science">
        <title>The transcriptional landscape of the mammalian genome.</title>
        <authorList>
            <person name="Carninci P."/>
            <person name="Kasukawa T."/>
            <person name="Katayama S."/>
            <person name="Gough J."/>
            <person name="Frith M.C."/>
            <person name="Maeda N."/>
            <person name="Oyama R."/>
            <person name="Ravasi T."/>
            <person name="Lenhard B."/>
            <person name="Wells C."/>
            <person name="Kodzius R."/>
            <person name="Shimokawa K."/>
            <person name="Bajic V.B."/>
            <person name="Brenner S.E."/>
            <person name="Batalov S."/>
            <person name="Forrest A.R."/>
            <person name="Zavolan M."/>
            <person name="Davis M.J."/>
            <person name="Wilming L.G."/>
            <person name="Aidinis V."/>
            <person name="Allen J.E."/>
            <person name="Ambesi-Impiombato A."/>
            <person name="Apweiler R."/>
            <person name="Aturaliya R.N."/>
            <person name="Bailey T.L."/>
            <person name="Bansal M."/>
            <person name="Baxter L."/>
            <person name="Beisel K.W."/>
            <person name="Bersano T."/>
            <person name="Bono H."/>
            <person name="Chalk A.M."/>
            <person name="Chiu K.P."/>
            <person name="Choudhary V."/>
            <person name="Christoffels A."/>
            <person name="Clutterbuck D.R."/>
            <person name="Crowe M.L."/>
            <person name="Dalla E."/>
            <person name="Dalrymple B.P."/>
            <person name="de Bono B."/>
            <person name="Della Gatta G."/>
            <person name="di Bernardo D."/>
            <person name="Down T."/>
            <person name="Engstrom P."/>
            <person name="Fagiolini M."/>
            <person name="Faulkner G."/>
            <person name="Fletcher C.F."/>
            <person name="Fukushima T."/>
            <person name="Furuno M."/>
            <person name="Futaki S."/>
            <person name="Gariboldi M."/>
            <person name="Georgii-Hemming P."/>
            <person name="Gingeras T.R."/>
            <person name="Gojobori T."/>
            <person name="Green R.E."/>
            <person name="Gustincich S."/>
            <person name="Harbers M."/>
            <person name="Hayashi Y."/>
            <person name="Hensch T.K."/>
            <person name="Hirokawa N."/>
            <person name="Hill D."/>
            <person name="Huminiecki L."/>
            <person name="Iacono M."/>
            <person name="Ikeo K."/>
            <person name="Iwama A."/>
            <person name="Ishikawa T."/>
            <person name="Jakt M."/>
            <person name="Kanapin A."/>
            <person name="Katoh M."/>
            <person name="Kawasawa Y."/>
            <person name="Kelso J."/>
            <person name="Kitamura H."/>
            <person name="Kitano H."/>
            <person name="Kollias G."/>
            <person name="Krishnan S.P."/>
            <person name="Kruger A."/>
            <person name="Kummerfeld S.K."/>
            <person name="Kurochkin I.V."/>
            <person name="Lareau L.F."/>
            <person name="Lazarevic D."/>
            <person name="Lipovich L."/>
            <person name="Liu J."/>
            <person name="Liuni S."/>
            <person name="McWilliam S."/>
            <person name="Madan Babu M."/>
            <person name="Madera M."/>
            <person name="Marchionni L."/>
            <person name="Matsuda H."/>
            <person name="Matsuzawa S."/>
            <person name="Miki H."/>
            <person name="Mignone F."/>
            <person name="Miyake S."/>
            <person name="Morris K."/>
            <person name="Mottagui-Tabar S."/>
            <person name="Mulder N."/>
            <person name="Nakano N."/>
            <person name="Nakauchi H."/>
            <person name="Ng P."/>
            <person name="Nilsson R."/>
            <person name="Nishiguchi S."/>
            <person name="Nishikawa S."/>
            <person name="Nori F."/>
            <person name="Ohara O."/>
            <person name="Okazaki Y."/>
            <person name="Orlando V."/>
            <person name="Pang K.C."/>
            <person name="Pavan W.J."/>
            <person name="Pavesi G."/>
            <person name="Pesole G."/>
            <person name="Petrovsky N."/>
            <person name="Piazza S."/>
            <person name="Reed J."/>
            <person name="Reid J.F."/>
            <person name="Ring B.Z."/>
            <person name="Ringwald M."/>
            <person name="Rost B."/>
            <person name="Ruan Y."/>
            <person name="Salzberg S.L."/>
            <person name="Sandelin A."/>
            <person name="Schneider C."/>
            <person name="Schoenbach C."/>
            <person name="Sekiguchi K."/>
            <person name="Semple C.A."/>
            <person name="Seno S."/>
            <person name="Sessa L."/>
            <person name="Sheng Y."/>
            <person name="Shibata Y."/>
            <person name="Shimada H."/>
            <person name="Shimada K."/>
            <person name="Silva D."/>
            <person name="Sinclair B."/>
            <person name="Sperling S."/>
            <person name="Stupka E."/>
            <person name="Sugiura K."/>
            <person name="Sultana R."/>
            <person name="Takenaka Y."/>
            <person name="Taki K."/>
            <person name="Tammoja K."/>
            <person name="Tan S.L."/>
            <person name="Tang S."/>
            <person name="Taylor M.S."/>
            <person name="Tegner J."/>
            <person name="Teichmann S.A."/>
            <person name="Ueda H.R."/>
            <person name="van Nimwegen E."/>
            <person name="Verardo R."/>
            <person name="Wei C.L."/>
            <person name="Yagi K."/>
            <person name="Yamanishi H."/>
            <person name="Zabarovsky E."/>
            <person name="Zhu S."/>
            <person name="Zimmer A."/>
            <person name="Hide W."/>
            <person name="Bult C."/>
            <person name="Grimmond S.M."/>
            <person name="Teasdale R.D."/>
            <person name="Liu E.T."/>
            <person name="Brusic V."/>
            <person name="Quackenbush J."/>
            <person name="Wahlestedt C."/>
            <person name="Mattick J.S."/>
            <person name="Hume D.A."/>
            <person name="Kai C."/>
            <person name="Sasaki D."/>
            <person name="Tomaru Y."/>
            <person name="Fukuda S."/>
            <person name="Kanamori-Katayama M."/>
            <person name="Suzuki M."/>
            <person name="Aoki J."/>
            <person name="Arakawa T."/>
            <person name="Iida J."/>
            <person name="Imamura K."/>
            <person name="Itoh M."/>
            <person name="Kato T."/>
            <person name="Kawaji H."/>
            <person name="Kawagashira N."/>
            <person name="Kawashima T."/>
            <person name="Kojima M."/>
            <person name="Kondo S."/>
            <person name="Konno H."/>
            <person name="Nakano K."/>
            <person name="Ninomiya N."/>
            <person name="Nishio T."/>
            <person name="Okada M."/>
            <person name="Plessy C."/>
            <person name="Shibata K."/>
            <person name="Shiraki T."/>
            <person name="Suzuki S."/>
            <person name="Tagami M."/>
            <person name="Waki K."/>
            <person name="Watahiki A."/>
            <person name="Okamura-Oho Y."/>
            <person name="Suzuki H."/>
            <person name="Kawai J."/>
            <person name="Hayashizaki Y."/>
        </authorList>
    </citation>
    <scope>NUCLEOTIDE SEQUENCE [LARGE SCALE MRNA]</scope>
    <source>
        <strain>C57BL/6J</strain>
        <tissue>Bone marrow</tissue>
        <tissue>Retina</tissue>
    </source>
</reference>
<reference key="4">
    <citation type="journal article" date="2004" name="Genome Res.">
        <title>The status, quality, and expansion of the NIH full-length cDNA project: the Mammalian Gene Collection (MGC).</title>
        <authorList>
            <consortium name="The MGC Project Team"/>
        </authorList>
    </citation>
    <scope>NUCLEOTIDE SEQUENCE [LARGE SCALE MRNA]</scope>
    <source>
        <strain>FVB/N</strain>
        <tissue>Colon</tissue>
        <tissue>Eye</tissue>
    </source>
</reference>
<reference key="5">
    <citation type="journal article" date="2005" name="Nat. Neurosci.">
        <title>DNER acts as a neuron-specific Notch ligand during Bergmann glial development.</title>
        <authorList>
            <person name="Eiraku M."/>
            <person name="Tohgo A."/>
            <person name="Ono K."/>
            <person name="Kaneko M."/>
            <person name="Fujishima K."/>
            <person name="Hirano T."/>
            <person name="Kengaku M."/>
        </authorList>
    </citation>
    <scope>INTERACTION WITH NOTCH1</scope>
    <scope>FUNCTION</scope>
</reference>
<reference key="6">
    <citation type="journal article" date="2006" name="Mol. Cell. Neurosci.">
        <title>Impaired cerebellar functions in mutant mice lacking DNER.</title>
        <authorList>
            <person name="Tohgo A."/>
            <person name="Eiraku M."/>
            <person name="Miyazaki T."/>
            <person name="Miura E."/>
            <person name="Kawaguchi S.Y."/>
            <person name="Nishi M."/>
            <person name="Watanabe M."/>
            <person name="Hirano T."/>
            <person name="Kengaku M."/>
            <person name="Takeshima H."/>
        </authorList>
    </citation>
    <scope>FUNCTION</scope>
    <scope>DISRUPTION PHENOTYPE</scope>
</reference>
<reference key="7">
    <citation type="journal article" date="2008" name="J. Proteome Res.">
        <title>Large-scale identification and evolution indexing of tyrosine phosphorylation sites from murine brain.</title>
        <authorList>
            <person name="Ballif B.A."/>
            <person name="Carey G.R."/>
            <person name="Sunyaev S.R."/>
            <person name="Gygi S.P."/>
        </authorList>
    </citation>
    <scope>PHOSPHORYLATION [LARGE SCALE ANALYSIS] AT TYR-711 AND TYR-721</scope>
    <scope>IDENTIFICATION BY MASS SPECTROMETRY [LARGE SCALE ANALYSIS]</scope>
    <source>
        <tissue>Brain</tissue>
    </source>
</reference>
<reference key="8">
    <citation type="journal article" date="2010" name="Cell">
        <title>A tissue-specific atlas of mouse protein phosphorylation and expression.</title>
        <authorList>
            <person name="Huttlin E.L."/>
            <person name="Jedrychowski M.P."/>
            <person name="Elias J.E."/>
            <person name="Goswami T."/>
            <person name="Rad R."/>
            <person name="Beausoleil S.A."/>
            <person name="Villen J."/>
            <person name="Haas W."/>
            <person name="Sowa M.E."/>
            <person name="Gygi S.P."/>
        </authorList>
    </citation>
    <scope>PHOSPHORYLATION [LARGE SCALE ANALYSIS] AT SER-685; THR-714 AND SER-722</scope>
    <scope>IDENTIFICATION BY MASS SPECTROMETRY [LARGE SCALE ANALYSIS]</scope>
    <source>
        <tissue>Brain</tissue>
    </source>
</reference>
<feature type="signal peptide" evidence="1">
    <location>
        <begin position="1"/>
        <end position="25"/>
    </location>
</feature>
<feature type="chain" id="PRO_0000253558" description="Delta and Notch-like epidermal growth factor-related receptor">
    <location>
        <begin position="26"/>
        <end position="737"/>
    </location>
</feature>
<feature type="topological domain" description="Extracellular" evidence="1">
    <location>
        <begin position="26"/>
        <end position="640"/>
    </location>
</feature>
<feature type="transmembrane region" description="Helical" evidence="1">
    <location>
        <begin position="641"/>
        <end position="661"/>
    </location>
</feature>
<feature type="topological domain" description="Cytoplasmic" evidence="1">
    <location>
        <begin position="662"/>
        <end position="737"/>
    </location>
</feature>
<feature type="domain" description="EGF-like 1" evidence="2">
    <location>
        <begin position="44"/>
        <end position="92"/>
    </location>
</feature>
<feature type="domain" description="EGF-like 2" evidence="2">
    <location>
        <begin position="94"/>
        <end position="133"/>
    </location>
</feature>
<feature type="domain" description="EGF-like 3" evidence="2">
    <location>
        <begin position="309"/>
        <end position="348"/>
    </location>
</feature>
<feature type="domain" description="EGF-like 4" evidence="2">
    <location>
        <begin position="349"/>
        <end position="390"/>
    </location>
</feature>
<feature type="domain" description="EGF-like 5" evidence="2">
    <location>
        <begin position="392"/>
        <end position="428"/>
    </location>
</feature>
<feature type="domain" description="EGF-like 6" evidence="2">
    <location>
        <begin position="430"/>
        <end position="466"/>
    </location>
</feature>
<feature type="domain" description="EGF-like 7" evidence="2">
    <location>
        <begin position="468"/>
        <end position="503"/>
    </location>
</feature>
<feature type="domain" description="EGF-like 8; calcium-binding" evidence="2">
    <location>
        <begin position="505"/>
        <end position="541"/>
    </location>
</feature>
<feature type="domain" description="EGF-like 9" evidence="2">
    <location>
        <begin position="543"/>
        <end position="579"/>
    </location>
</feature>
<feature type="domain" description="EGF-like 10; calcium-binding" evidence="2">
    <location>
        <begin position="581"/>
        <end position="617"/>
    </location>
</feature>
<feature type="region of interest" description="Interaction with NOTCH1" evidence="5">
    <location>
        <begin position="44"/>
        <end position="133"/>
    </location>
</feature>
<feature type="region of interest" description="Interaction with AP1G1 and somatodendritic targeting" evidence="3">
    <location>
        <begin position="677"/>
        <end position="680"/>
    </location>
</feature>
<feature type="modified residue" description="Phosphoserine" evidence="9">
    <location>
        <position position="685"/>
    </location>
</feature>
<feature type="modified residue" description="Phosphotyrosine" evidence="8">
    <location>
        <position position="711"/>
    </location>
</feature>
<feature type="modified residue" description="Phosphothreonine" evidence="9">
    <location>
        <position position="714"/>
    </location>
</feature>
<feature type="modified residue" description="Phosphotyrosine" evidence="8">
    <location>
        <position position="721"/>
    </location>
</feature>
<feature type="modified residue" description="Phosphoserine" evidence="9">
    <location>
        <position position="722"/>
    </location>
</feature>
<feature type="glycosylation site" description="N-linked (GlcNAc...) asparagine" evidence="1">
    <location>
        <position position="204"/>
    </location>
</feature>
<feature type="glycosylation site" description="N-linked (GlcNAc...) asparagine" evidence="1">
    <location>
        <position position="564"/>
    </location>
</feature>
<feature type="disulfide bond" evidence="2">
    <location>
        <begin position="48"/>
        <end position="59"/>
    </location>
</feature>
<feature type="disulfide bond" evidence="2">
    <location>
        <begin position="53"/>
        <end position="80"/>
    </location>
</feature>
<feature type="disulfide bond" evidence="2">
    <location>
        <begin position="82"/>
        <end position="91"/>
    </location>
</feature>
<feature type="disulfide bond" evidence="2">
    <location>
        <begin position="98"/>
        <end position="108"/>
    </location>
</feature>
<feature type="disulfide bond" evidence="2">
    <location>
        <begin position="103"/>
        <end position="121"/>
    </location>
</feature>
<feature type="disulfide bond" evidence="2">
    <location>
        <begin position="123"/>
        <end position="132"/>
    </location>
</feature>
<feature type="disulfide bond" evidence="2">
    <location>
        <begin position="319"/>
        <end position="336"/>
    </location>
</feature>
<feature type="disulfide bond" evidence="2">
    <location>
        <begin position="338"/>
        <end position="347"/>
    </location>
</feature>
<feature type="disulfide bond" evidence="2">
    <location>
        <begin position="353"/>
        <end position="364"/>
    </location>
</feature>
<feature type="disulfide bond" evidence="2">
    <location>
        <begin position="358"/>
        <end position="378"/>
    </location>
</feature>
<feature type="disulfide bond" evidence="2">
    <location>
        <begin position="380"/>
        <end position="389"/>
    </location>
</feature>
<feature type="disulfide bond" evidence="2">
    <location>
        <begin position="396"/>
        <end position="407"/>
    </location>
</feature>
<feature type="disulfide bond" evidence="2">
    <location>
        <begin position="401"/>
        <end position="416"/>
    </location>
</feature>
<feature type="disulfide bond" evidence="2">
    <location>
        <begin position="418"/>
        <end position="427"/>
    </location>
</feature>
<feature type="disulfide bond" evidence="2">
    <location>
        <begin position="434"/>
        <end position="445"/>
    </location>
</feature>
<feature type="disulfide bond" evidence="2">
    <location>
        <begin position="439"/>
        <end position="454"/>
    </location>
</feature>
<feature type="disulfide bond" evidence="2">
    <location>
        <begin position="456"/>
        <end position="465"/>
    </location>
</feature>
<feature type="disulfide bond" evidence="2">
    <location>
        <begin position="472"/>
        <end position="482"/>
    </location>
</feature>
<feature type="disulfide bond" evidence="2">
    <location>
        <begin position="477"/>
        <end position="491"/>
    </location>
</feature>
<feature type="disulfide bond" evidence="2">
    <location>
        <begin position="493"/>
        <end position="502"/>
    </location>
</feature>
<feature type="disulfide bond" evidence="2">
    <location>
        <begin position="509"/>
        <end position="520"/>
    </location>
</feature>
<feature type="disulfide bond" evidence="2">
    <location>
        <begin position="514"/>
        <end position="529"/>
    </location>
</feature>
<feature type="disulfide bond" evidence="2">
    <location>
        <begin position="531"/>
        <end position="540"/>
    </location>
</feature>
<feature type="disulfide bond" evidence="2">
    <location>
        <begin position="547"/>
        <end position="558"/>
    </location>
</feature>
<feature type="disulfide bond" evidence="2">
    <location>
        <begin position="552"/>
        <end position="567"/>
    </location>
</feature>
<feature type="disulfide bond" evidence="2">
    <location>
        <begin position="569"/>
        <end position="578"/>
    </location>
</feature>
<feature type="disulfide bond" evidence="2">
    <location>
        <begin position="585"/>
        <end position="596"/>
    </location>
</feature>
<feature type="disulfide bond" evidence="2">
    <location>
        <begin position="590"/>
        <end position="605"/>
    </location>
</feature>
<feature type="disulfide bond" evidence="2">
    <location>
        <begin position="607"/>
        <end position="616"/>
    </location>
</feature>
<feature type="mutagenesis site" description="Fails to be restricted to the somatodendritic compartment." evidence="3">
    <original>Y</original>
    <variation>A</variation>
    <location>
        <position position="677"/>
    </location>
</feature>
<feature type="sequence conflict" description="In Ref. 2; BAB72175." evidence="7" ref="2">
    <original>G</original>
    <variation>A</variation>
    <location>
        <position position="424"/>
    </location>
</feature>
<feature type="sequence conflict" description="In Ref. 1; AAM14419." evidence="7" ref="1">
    <original>CL</original>
    <variation>SV</variation>
    <location>
        <begin position="509"/>
        <end position="510"/>
    </location>
</feature>
<comment type="function">
    <text evidence="5 6">Mediates neuron-glia interaction during astrocytogenesis. May promote differentiation of Bergmann glia during cerebellar development by activating DELTEX-dependent NOTCH1 signaling.</text>
</comment>
<comment type="subunit">
    <text evidence="3 5">Interacts with AP1G1. Interacts with NOTCH1.</text>
</comment>
<comment type="subcellular location">
    <subcellularLocation>
        <location evidence="3 4">Cell membrane</location>
        <topology evidence="3 4">Single-pass type I membrane protein</topology>
    </subcellularLocation>
    <text>Present on the membrane of dendrites and cell bodies but excluded from axonal membrane. Also found in early endosomes in the somatodendritic region.</text>
</comment>
<comment type="tissue specificity">
    <text evidence="3 4">Specifically expressed in brain neurons (at protein level).</text>
</comment>
<comment type="developmental stage">
    <text evidence="3 4">Expression in the central nervous system starts at 11 dpc, peaks during postnatal development and declines in the adult brain. At P7 and P20, present in several types of post-mitotic neurons, including cortical and hippocampal pyramidal neurons, cerebellar granule cells and Purkinje cells. Absent from mitotic neuroblasts in the ventricular zones.</text>
</comment>
<comment type="PTM">
    <text evidence="4">N-glycosylated.</text>
</comment>
<comment type="disruption phenotype">
    <text evidence="6">Mice show no obvious abnormality and no apparent survival disadvantage. However, they have delayed cerebellar histogenesis and exhibit motor discoordination at adult stages.</text>
</comment>
<comment type="sequence caution" evidence="7">
    <conflict type="frameshift">
        <sequence resource="EMBL-CDS" id="BAE31470"/>
    </conflict>
</comment>
<comment type="sequence caution" evidence="7">
    <conflict type="frameshift">
        <sequence resource="EMBL-CDS" id="BAE31828"/>
    </conflict>
</comment>
<protein>
    <recommendedName>
        <fullName>Delta and Notch-like epidermal growth factor-related receptor</fullName>
    </recommendedName>
    <alternativeName>
        <fullName>Brain EGF repeat-containing transmembrane protein</fullName>
    </alternativeName>
</protein>
<dbReference type="EMBL" id="AY032924">
    <property type="protein sequence ID" value="AAK50342.1"/>
    <property type="molecule type" value="mRNA"/>
</dbReference>
<dbReference type="EMBL" id="AF370126">
    <property type="protein sequence ID" value="AAM14419.1"/>
    <property type="molecule type" value="mRNA"/>
</dbReference>
<dbReference type="EMBL" id="AB067650">
    <property type="protein sequence ID" value="BAB72175.1"/>
    <property type="molecule type" value="mRNA"/>
</dbReference>
<dbReference type="EMBL" id="AK044597">
    <property type="protein sequence ID" value="BAC31995.1"/>
    <property type="molecule type" value="mRNA"/>
</dbReference>
<dbReference type="EMBL" id="AK152755">
    <property type="protein sequence ID" value="BAE31470.1"/>
    <property type="status" value="ALT_FRAME"/>
    <property type="molecule type" value="mRNA"/>
</dbReference>
<dbReference type="EMBL" id="AK153235">
    <property type="protein sequence ID" value="BAE31828.1"/>
    <property type="status" value="ALT_FRAME"/>
    <property type="molecule type" value="mRNA"/>
</dbReference>
<dbReference type="EMBL" id="BC022636">
    <property type="protein sequence ID" value="AAH22636.1"/>
    <property type="molecule type" value="mRNA"/>
</dbReference>
<dbReference type="EMBL" id="BC034634">
    <property type="protein sequence ID" value="AAH34634.1"/>
    <property type="molecule type" value="mRNA"/>
</dbReference>
<dbReference type="CCDS" id="CCDS15105.1"/>
<dbReference type="RefSeq" id="NP_690879.1">
    <property type="nucleotide sequence ID" value="NM_152915.1"/>
</dbReference>
<dbReference type="SMR" id="Q8JZM4"/>
<dbReference type="BioGRID" id="230612">
    <property type="interactions" value="1"/>
</dbReference>
<dbReference type="FunCoup" id="Q8JZM4">
    <property type="interactions" value="534"/>
</dbReference>
<dbReference type="STRING" id="10090.ENSMUSP00000042927"/>
<dbReference type="GlyConnect" id="2251">
    <property type="glycosylation" value="4 N-Linked glycans (2 sites)"/>
</dbReference>
<dbReference type="GlyCosmos" id="Q8JZM4">
    <property type="glycosylation" value="4 sites, 4 glycans"/>
</dbReference>
<dbReference type="GlyGen" id="Q8JZM4">
    <property type="glycosylation" value="5 sites, 8 N-linked glycans (4 sites)"/>
</dbReference>
<dbReference type="iPTMnet" id="Q8JZM4"/>
<dbReference type="PhosphoSitePlus" id="Q8JZM4"/>
<dbReference type="SwissPalm" id="Q8JZM4"/>
<dbReference type="PaxDb" id="10090-ENSMUSP00000042927"/>
<dbReference type="PeptideAtlas" id="Q8JZM4"/>
<dbReference type="ProteomicsDB" id="279740"/>
<dbReference type="Antibodypedia" id="2715">
    <property type="antibodies" value="233 antibodies from 30 providers"/>
</dbReference>
<dbReference type="DNASU" id="227325"/>
<dbReference type="Ensembl" id="ENSMUST00000049126.13">
    <property type="protein sequence ID" value="ENSMUSP00000042927.7"/>
    <property type="gene ID" value="ENSMUSG00000036766.13"/>
</dbReference>
<dbReference type="GeneID" id="227325"/>
<dbReference type="KEGG" id="mmu:227325"/>
<dbReference type="UCSC" id="uc007bsw.1">
    <property type="organism name" value="mouse"/>
</dbReference>
<dbReference type="AGR" id="MGI:2152889"/>
<dbReference type="CTD" id="92737"/>
<dbReference type="MGI" id="MGI:2152889">
    <property type="gene designation" value="Dner"/>
</dbReference>
<dbReference type="VEuPathDB" id="HostDB:ENSMUSG00000036766"/>
<dbReference type="eggNOG" id="KOG1217">
    <property type="taxonomic scope" value="Eukaryota"/>
</dbReference>
<dbReference type="GeneTree" id="ENSGT00940000158872"/>
<dbReference type="HOGENOM" id="CLU_019513_0_0_1"/>
<dbReference type="InParanoid" id="Q8JZM4"/>
<dbReference type="OMA" id="ANDVECS"/>
<dbReference type="OrthoDB" id="283575at2759"/>
<dbReference type="PhylomeDB" id="Q8JZM4"/>
<dbReference type="TreeFam" id="TF351322"/>
<dbReference type="BioGRID-ORCS" id="227325">
    <property type="hits" value="2 hits in 78 CRISPR screens"/>
</dbReference>
<dbReference type="ChiTaRS" id="Dner">
    <property type="organism name" value="mouse"/>
</dbReference>
<dbReference type="PRO" id="PR:Q8JZM4"/>
<dbReference type="Proteomes" id="UP000000589">
    <property type="component" value="Chromosome 1"/>
</dbReference>
<dbReference type="RNAct" id="Q8JZM4">
    <property type="molecule type" value="protein"/>
</dbReference>
<dbReference type="Bgee" id="ENSMUSG00000036766">
    <property type="expression patterns" value="Expressed in cerebellum lobe and 201 other cell types or tissues"/>
</dbReference>
<dbReference type="ExpressionAtlas" id="Q8JZM4">
    <property type="expression patterns" value="baseline and differential"/>
</dbReference>
<dbReference type="GO" id="GO:0030425">
    <property type="term" value="C:dendrite"/>
    <property type="evidence" value="ECO:0000314"/>
    <property type="project" value="MGI"/>
</dbReference>
<dbReference type="GO" id="GO:0005769">
    <property type="term" value="C:early endosome"/>
    <property type="evidence" value="ECO:0007669"/>
    <property type="project" value="Ensembl"/>
</dbReference>
<dbReference type="GO" id="GO:0043025">
    <property type="term" value="C:neuronal cell body"/>
    <property type="evidence" value="ECO:0000314"/>
    <property type="project" value="MGI"/>
</dbReference>
<dbReference type="GO" id="GO:0005886">
    <property type="term" value="C:plasma membrane"/>
    <property type="evidence" value="ECO:0000304"/>
    <property type="project" value="Reactome"/>
</dbReference>
<dbReference type="GO" id="GO:0005509">
    <property type="term" value="F:calcium ion binding"/>
    <property type="evidence" value="ECO:0007669"/>
    <property type="project" value="InterPro"/>
</dbReference>
<dbReference type="GO" id="GO:0005112">
    <property type="term" value="F:Notch binding"/>
    <property type="evidence" value="ECO:0000353"/>
    <property type="project" value="MGI"/>
</dbReference>
<dbReference type="GO" id="GO:0007417">
    <property type="term" value="P:central nervous system development"/>
    <property type="evidence" value="ECO:0007669"/>
    <property type="project" value="Ensembl"/>
</dbReference>
<dbReference type="GO" id="GO:0010001">
    <property type="term" value="P:glial cell differentiation"/>
    <property type="evidence" value="ECO:0000314"/>
    <property type="project" value="MGI"/>
</dbReference>
<dbReference type="GO" id="GO:0007220">
    <property type="term" value="P:Notch receptor processing"/>
    <property type="evidence" value="ECO:0000314"/>
    <property type="project" value="MGI"/>
</dbReference>
<dbReference type="GO" id="GO:0007219">
    <property type="term" value="P:Notch signaling pathway"/>
    <property type="evidence" value="ECO:0007669"/>
    <property type="project" value="UniProtKB-KW"/>
</dbReference>
<dbReference type="GO" id="GO:0048741">
    <property type="term" value="P:skeletal muscle fiber development"/>
    <property type="evidence" value="ECO:0000314"/>
    <property type="project" value="MGI"/>
</dbReference>
<dbReference type="CDD" id="cd00054">
    <property type="entry name" value="EGF_CA"/>
    <property type="match status" value="5"/>
</dbReference>
<dbReference type="FunFam" id="2.10.25.10:FF:000424">
    <property type="entry name" value="Delta and Notch-like epidermal growth factor-related receptor"/>
    <property type="match status" value="1"/>
</dbReference>
<dbReference type="FunFam" id="2.10.25.10:FF:000566">
    <property type="entry name" value="delta and Notch-like epidermal growth factor-related receptor"/>
    <property type="match status" value="1"/>
</dbReference>
<dbReference type="FunFam" id="2.10.25.10:FF:000609">
    <property type="entry name" value="delta and Notch-like epidermal growth factor-related receptor"/>
    <property type="match status" value="1"/>
</dbReference>
<dbReference type="FunFam" id="2.10.25.10:FF:000247">
    <property type="entry name" value="Delta/notch like EGF repeat containing"/>
    <property type="match status" value="1"/>
</dbReference>
<dbReference type="FunFam" id="2.10.25.10:FF:000377">
    <property type="entry name" value="Delta/notch like EGF repeat containing"/>
    <property type="match status" value="1"/>
</dbReference>
<dbReference type="FunFam" id="2.10.25.10:FF:000523">
    <property type="entry name" value="Delta/notch like EGF repeat containing"/>
    <property type="match status" value="1"/>
</dbReference>
<dbReference type="FunFam" id="2.10.25.10:FF:000667">
    <property type="entry name" value="Delta/notch like EGF repeat containing"/>
    <property type="match status" value="1"/>
</dbReference>
<dbReference type="FunFam" id="2.10.25.10:FF:000703">
    <property type="entry name" value="Delta/notch like EGF repeat containing"/>
    <property type="match status" value="1"/>
</dbReference>
<dbReference type="FunFam" id="2.10.25.10:FF:000714">
    <property type="entry name" value="Delta/notch like EGF repeat containing"/>
    <property type="match status" value="1"/>
</dbReference>
<dbReference type="FunFam" id="2.10.25.10:FF:000597">
    <property type="entry name" value="Delta/notch-like EGF repeat containing"/>
    <property type="match status" value="1"/>
</dbReference>
<dbReference type="Gene3D" id="2.10.25.10">
    <property type="entry name" value="Laminin"/>
    <property type="match status" value="9"/>
</dbReference>
<dbReference type="InterPro" id="IPR045769">
    <property type="entry name" value="DNER_C"/>
</dbReference>
<dbReference type="InterPro" id="IPR001881">
    <property type="entry name" value="EGF-like_Ca-bd_dom"/>
</dbReference>
<dbReference type="InterPro" id="IPR000742">
    <property type="entry name" value="EGF-like_dom"/>
</dbReference>
<dbReference type="InterPro" id="IPR000152">
    <property type="entry name" value="EGF-type_Asp/Asn_hydroxyl_site"/>
</dbReference>
<dbReference type="InterPro" id="IPR018097">
    <property type="entry name" value="EGF_Ca-bd_CS"/>
</dbReference>
<dbReference type="InterPro" id="IPR009030">
    <property type="entry name" value="Growth_fac_rcpt_cys_sf"/>
</dbReference>
<dbReference type="InterPro" id="IPR051022">
    <property type="entry name" value="Notch_Cell-Fate_Det"/>
</dbReference>
<dbReference type="PANTHER" id="PTHR24049">
    <property type="entry name" value="CRUMBS FAMILY MEMBER"/>
    <property type="match status" value="1"/>
</dbReference>
<dbReference type="Pfam" id="PF19330">
    <property type="entry name" value="DNER_C"/>
    <property type="match status" value="1"/>
</dbReference>
<dbReference type="Pfam" id="PF00008">
    <property type="entry name" value="EGF"/>
    <property type="match status" value="8"/>
</dbReference>
<dbReference type="PRINTS" id="PR00010">
    <property type="entry name" value="EGFBLOOD"/>
</dbReference>
<dbReference type="SMART" id="SM00181">
    <property type="entry name" value="EGF"/>
    <property type="match status" value="10"/>
</dbReference>
<dbReference type="SMART" id="SM00179">
    <property type="entry name" value="EGF_CA"/>
    <property type="match status" value="7"/>
</dbReference>
<dbReference type="SUPFAM" id="SSF57196">
    <property type="entry name" value="EGF/Laminin"/>
    <property type="match status" value="4"/>
</dbReference>
<dbReference type="SUPFAM" id="SSF57184">
    <property type="entry name" value="Growth factor receptor domain"/>
    <property type="match status" value="2"/>
</dbReference>
<dbReference type="PROSITE" id="PS00010">
    <property type="entry name" value="ASX_HYDROXYL"/>
    <property type="match status" value="2"/>
</dbReference>
<dbReference type="PROSITE" id="PS00022">
    <property type="entry name" value="EGF_1"/>
    <property type="match status" value="10"/>
</dbReference>
<dbReference type="PROSITE" id="PS01186">
    <property type="entry name" value="EGF_2"/>
    <property type="match status" value="7"/>
</dbReference>
<dbReference type="PROSITE" id="PS50026">
    <property type="entry name" value="EGF_3"/>
    <property type="match status" value="10"/>
</dbReference>
<dbReference type="PROSITE" id="PS01187">
    <property type="entry name" value="EGF_CA"/>
    <property type="match status" value="2"/>
</dbReference>